<accession>B3N534</accession>
<evidence type="ECO:0000255" key="1">
    <source>
        <dbReference type="HAMAP-Rule" id="MF_03029"/>
    </source>
</evidence>
<comment type="function">
    <text evidence="1">Required for maturation of ribosomal RNAs and formation of the large ribosomal subunit.</text>
</comment>
<comment type="subcellular location">
    <subcellularLocation>
        <location evidence="1">Nucleus</location>
        <location evidence="1">Nucleolus</location>
    </subcellularLocation>
    <subcellularLocation>
        <location evidence="1">Nucleus</location>
        <location evidence="1">Nucleoplasm</location>
    </subcellularLocation>
</comment>
<comment type="similarity">
    <text evidence="1">Belongs to the WD repeat WDR12/YTM1 family.</text>
</comment>
<dbReference type="EMBL" id="CH954177">
    <property type="protein sequence ID" value="EDV58979.1"/>
    <property type="molecule type" value="Genomic_DNA"/>
</dbReference>
<dbReference type="SMR" id="B3N534"/>
<dbReference type="EnsemblMetazoa" id="FBtr0130412">
    <property type="protein sequence ID" value="FBpp0128904"/>
    <property type="gene ID" value="FBgn0102667"/>
</dbReference>
<dbReference type="EnsemblMetazoa" id="XM_001969884.3">
    <property type="protein sequence ID" value="XP_001969920.1"/>
    <property type="gene ID" value="LOC6542886"/>
</dbReference>
<dbReference type="GeneID" id="6542886"/>
<dbReference type="KEGG" id="der:6542886"/>
<dbReference type="eggNOG" id="KOG0313">
    <property type="taxonomic scope" value="Eukaryota"/>
</dbReference>
<dbReference type="HOGENOM" id="CLU_000288_57_0_1"/>
<dbReference type="OMA" id="DHKYVEF"/>
<dbReference type="OrthoDB" id="10251381at2759"/>
<dbReference type="PhylomeDB" id="B3N534"/>
<dbReference type="Proteomes" id="UP000008711">
    <property type="component" value="Unassembled WGS sequence"/>
</dbReference>
<dbReference type="GO" id="GO:0005654">
    <property type="term" value="C:nucleoplasm"/>
    <property type="evidence" value="ECO:0007669"/>
    <property type="project" value="UniProtKB-SubCell"/>
</dbReference>
<dbReference type="GO" id="GO:0070545">
    <property type="term" value="C:PeBoW complex"/>
    <property type="evidence" value="ECO:0000250"/>
    <property type="project" value="UniProtKB"/>
</dbReference>
<dbReference type="GO" id="GO:0030687">
    <property type="term" value="C:preribosome, large subunit precursor"/>
    <property type="evidence" value="ECO:0007669"/>
    <property type="project" value="UniProtKB-UniRule"/>
</dbReference>
<dbReference type="GO" id="GO:0043021">
    <property type="term" value="F:ribonucleoprotein complex binding"/>
    <property type="evidence" value="ECO:0007669"/>
    <property type="project" value="UniProtKB-UniRule"/>
</dbReference>
<dbReference type="GO" id="GO:0000466">
    <property type="term" value="P:maturation of 5.8S rRNA from tricistronic rRNA transcript (SSU-rRNA, 5.8S rRNA, LSU-rRNA)"/>
    <property type="evidence" value="ECO:0007669"/>
    <property type="project" value="UniProtKB-UniRule"/>
</dbReference>
<dbReference type="GO" id="GO:0000463">
    <property type="term" value="P:maturation of LSU-rRNA from tricistronic rRNA transcript (SSU-rRNA, 5.8S rRNA, LSU-rRNA)"/>
    <property type="evidence" value="ECO:0000250"/>
    <property type="project" value="UniProtKB"/>
</dbReference>
<dbReference type="CDD" id="cd00200">
    <property type="entry name" value="WD40"/>
    <property type="match status" value="1"/>
</dbReference>
<dbReference type="FunFam" id="2.130.10.10:FF:000878">
    <property type="entry name" value="Ribosome biogenesis protein WDR12 homolog"/>
    <property type="match status" value="1"/>
</dbReference>
<dbReference type="FunFam" id="2.130.10.10:FF:000989">
    <property type="entry name" value="Ribosome biogenesis protein WDR12 homolog"/>
    <property type="match status" value="1"/>
</dbReference>
<dbReference type="FunFam" id="2.130.10.10:FF:001205">
    <property type="entry name" value="Ribosome biogenesis protein WDR12 homolog"/>
    <property type="match status" value="1"/>
</dbReference>
<dbReference type="Gene3D" id="2.130.10.10">
    <property type="entry name" value="YVTN repeat-like/Quinoprotein amine dehydrogenase"/>
    <property type="match status" value="3"/>
</dbReference>
<dbReference type="HAMAP" id="MF_03029">
    <property type="entry name" value="WDR12"/>
    <property type="match status" value="1"/>
</dbReference>
<dbReference type="InterPro" id="IPR020472">
    <property type="entry name" value="G-protein_beta_WD-40_rep"/>
</dbReference>
<dbReference type="InterPro" id="IPR012972">
    <property type="entry name" value="NLE"/>
</dbReference>
<dbReference type="InterPro" id="IPR015943">
    <property type="entry name" value="WD40/YVTN_repeat-like_dom_sf"/>
</dbReference>
<dbReference type="InterPro" id="IPR019775">
    <property type="entry name" value="WD40_repeat_CS"/>
</dbReference>
<dbReference type="InterPro" id="IPR036322">
    <property type="entry name" value="WD40_repeat_dom_sf"/>
</dbReference>
<dbReference type="InterPro" id="IPR001680">
    <property type="entry name" value="WD40_rpt"/>
</dbReference>
<dbReference type="InterPro" id="IPR028599">
    <property type="entry name" value="WDR12/Ytm1"/>
</dbReference>
<dbReference type="PANTHER" id="PTHR19855:SF11">
    <property type="entry name" value="RIBOSOME BIOGENESIS PROTEIN WDR12"/>
    <property type="match status" value="1"/>
</dbReference>
<dbReference type="PANTHER" id="PTHR19855">
    <property type="entry name" value="WD40 REPEAT PROTEIN 12, 37"/>
    <property type="match status" value="1"/>
</dbReference>
<dbReference type="Pfam" id="PF08154">
    <property type="entry name" value="NLE"/>
    <property type="match status" value="1"/>
</dbReference>
<dbReference type="Pfam" id="PF00400">
    <property type="entry name" value="WD40"/>
    <property type="match status" value="7"/>
</dbReference>
<dbReference type="PRINTS" id="PR00320">
    <property type="entry name" value="GPROTEINBRPT"/>
</dbReference>
<dbReference type="SMART" id="SM00320">
    <property type="entry name" value="WD40"/>
    <property type="match status" value="7"/>
</dbReference>
<dbReference type="SUPFAM" id="SSF50978">
    <property type="entry name" value="WD40 repeat-like"/>
    <property type="match status" value="1"/>
</dbReference>
<dbReference type="PROSITE" id="PS00678">
    <property type="entry name" value="WD_REPEATS_1"/>
    <property type="match status" value="1"/>
</dbReference>
<dbReference type="PROSITE" id="PS50082">
    <property type="entry name" value="WD_REPEATS_2"/>
    <property type="match status" value="4"/>
</dbReference>
<dbReference type="PROSITE" id="PS50294">
    <property type="entry name" value="WD_REPEATS_REGION"/>
    <property type="match status" value="1"/>
</dbReference>
<proteinExistence type="inferred from homology"/>
<reference key="1">
    <citation type="journal article" date="2007" name="Nature">
        <title>Evolution of genes and genomes on the Drosophila phylogeny.</title>
        <authorList>
            <consortium name="Drosophila 12 genomes consortium"/>
        </authorList>
    </citation>
    <scope>NUCLEOTIDE SEQUENCE [LARGE SCALE GENOMIC DNA]</scope>
    <source>
        <strain>Tucson 14021-0224.01</strain>
    </source>
</reference>
<gene>
    <name type="ORF">GG10358</name>
</gene>
<keyword id="KW-0539">Nucleus</keyword>
<keyword id="KW-0677">Repeat</keyword>
<keyword id="KW-0690">Ribosome biogenesis</keyword>
<keyword id="KW-0698">rRNA processing</keyword>
<keyword id="KW-0853">WD repeat</keyword>
<protein>
    <recommendedName>
        <fullName evidence="1">Ribosome biogenesis protein WDR12 homolog</fullName>
    </recommendedName>
</protein>
<name>WDR12_DROER</name>
<organism>
    <name type="scientific">Drosophila erecta</name>
    <name type="common">Fruit fly</name>
    <dbReference type="NCBI Taxonomy" id="7220"/>
    <lineage>
        <taxon>Eukaryota</taxon>
        <taxon>Metazoa</taxon>
        <taxon>Ecdysozoa</taxon>
        <taxon>Arthropoda</taxon>
        <taxon>Hexapoda</taxon>
        <taxon>Insecta</taxon>
        <taxon>Pterygota</taxon>
        <taxon>Neoptera</taxon>
        <taxon>Endopterygota</taxon>
        <taxon>Diptera</taxon>
        <taxon>Brachycera</taxon>
        <taxon>Muscomorpha</taxon>
        <taxon>Ephydroidea</taxon>
        <taxon>Drosophilidae</taxon>
        <taxon>Drosophila</taxon>
        <taxon>Sophophora</taxon>
    </lineage>
</organism>
<sequence>MDVENGEGQVQVHLKTKQEHYAVPDVPYAIDGTVTTVELNTFVNALLRQKDGSSDTDFDFLVFDEYLRGRLCDHLREKAISFEDAIEIEYVERFPAPEPQDCLLHDDWVSAVKASGKWILSGCYDNTLNLWTNKGKHILTISGHTAPIKAVDWISLDEETGRFVSTSQDQTAMLWQWNVGSNSVECVSVCKGHERGVDSVSVSPDGLRFATGSWDTMLKVWSAEQEDAAEGSSKRMKESGVRTPKITLQGHRESVSAVQWMDASTLLTGSWDHTLKVWDLSLEGIKTEISTNKSIFDASYSKLNRLILTASADKNLRLYDPRTNQGSVVRNTYLGHNAWVQTVMWSTTEEFLFVSGAYDNQNKLWDCRSPKAPLYDLLGHGEKVLDIDWSNPKYIVSGGVDNTVRVFKSRKALAEDTEAK</sequence>
<feature type="chain" id="PRO_0000369556" description="Ribosome biogenesis protein WDR12 homolog">
    <location>
        <begin position="1"/>
        <end position="420"/>
    </location>
</feature>
<feature type="repeat" description="WD 1">
    <location>
        <begin position="104"/>
        <end position="142"/>
    </location>
</feature>
<feature type="repeat" description="WD 2">
    <location>
        <begin position="143"/>
        <end position="185"/>
    </location>
</feature>
<feature type="repeat" description="WD 3">
    <location>
        <begin position="192"/>
        <end position="231"/>
    </location>
</feature>
<feature type="repeat" description="WD 4">
    <location>
        <begin position="250"/>
        <end position="288"/>
    </location>
</feature>
<feature type="repeat" description="WD 5">
    <location>
        <begin position="290"/>
        <end position="329"/>
    </location>
</feature>
<feature type="repeat" description="WD 6">
    <location>
        <begin position="335"/>
        <end position="375"/>
    </location>
</feature>
<feature type="repeat" description="WD 7">
    <location>
        <begin position="379"/>
        <end position="417"/>
    </location>
</feature>
<feature type="region of interest" description="Ubiquitin-like (UBL) domain" evidence="1">
    <location>
        <begin position="10"/>
        <end position="92"/>
    </location>
</feature>